<gene>
    <name evidence="1" type="primary">pyrF</name>
    <name type="ordered locus">BF0909</name>
</gene>
<dbReference type="EC" id="4.1.1.23" evidence="1"/>
<dbReference type="EMBL" id="AP006841">
    <property type="protein sequence ID" value="BAD47660.1"/>
    <property type="molecule type" value="Genomic_DNA"/>
</dbReference>
<dbReference type="RefSeq" id="WP_011202194.1">
    <property type="nucleotide sequence ID" value="NC_006347.1"/>
</dbReference>
<dbReference type="RefSeq" id="YP_098194.1">
    <property type="nucleotide sequence ID" value="NC_006347.1"/>
</dbReference>
<dbReference type="SMR" id="Q64XW6"/>
<dbReference type="STRING" id="295405.BF0909"/>
<dbReference type="KEGG" id="bfr:BF0909"/>
<dbReference type="PATRIC" id="fig|295405.11.peg.912"/>
<dbReference type="HOGENOM" id="CLU_060704_1_0_10"/>
<dbReference type="OrthoDB" id="9808470at2"/>
<dbReference type="UniPathway" id="UPA00070">
    <property type="reaction ID" value="UER00120"/>
</dbReference>
<dbReference type="Proteomes" id="UP000002197">
    <property type="component" value="Chromosome"/>
</dbReference>
<dbReference type="GO" id="GO:0004590">
    <property type="term" value="F:orotidine-5'-phosphate decarboxylase activity"/>
    <property type="evidence" value="ECO:0007669"/>
    <property type="project" value="UniProtKB-UniRule"/>
</dbReference>
<dbReference type="GO" id="GO:0006207">
    <property type="term" value="P:'de novo' pyrimidine nucleobase biosynthetic process"/>
    <property type="evidence" value="ECO:0007669"/>
    <property type="project" value="InterPro"/>
</dbReference>
<dbReference type="GO" id="GO:0044205">
    <property type="term" value="P:'de novo' UMP biosynthetic process"/>
    <property type="evidence" value="ECO:0007669"/>
    <property type="project" value="UniProtKB-UniRule"/>
</dbReference>
<dbReference type="CDD" id="cd04725">
    <property type="entry name" value="OMP_decarboxylase_like"/>
    <property type="match status" value="1"/>
</dbReference>
<dbReference type="FunFam" id="3.20.20.70:FF:000157">
    <property type="entry name" value="Orotidine 5'-phosphate decarboxylase"/>
    <property type="match status" value="1"/>
</dbReference>
<dbReference type="Gene3D" id="3.20.20.70">
    <property type="entry name" value="Aldolase class I"/>
    <property type="match status" value="1"/>
</dbReference>
<dbReference type="HAMAP" id="MF_01215">
    <property type="entry name" value="OMPdecase_type2"/>
    <property type="match status" value="1"/>
</dbReference>
<dbReference type="InterPro" id="IPR013785">
    <property type="entry name" value="Aldolase_TIM"/>
</dbReference>
<dbReference type="InterPro" id="IPR011995">
    <property type="entry name" value="OMPdecase_type-2"/>
</dbReference>
<dbReference type="InterPro" id="IPR001754">
    <property type="entry name" value="OMPdeCOase_dom"/>
</dbReference>
<dbReference type="InterPro" id="IPR011060">
    <property type="entry name" value="RibuloseP-bd_barrel"/>
</dbReference>
<dbReference type="NCBIfam" id="TIGR02127">
    <property type="entry name" value="pyrF_sub2"/>
    <property type="match status" value="1"/>
</dbReference>
<dbReference type="PANTHER" id="PTHR43375">
    <property type="entry name" value="OROTIDINE 5'-PHOSPHATE DECARBOXYLASE"/>
    <property type="match status" value="1"/>
</dbReference>
<dbReference type="PANTHER" id="PTHR43375:SF1">
    <property type="entry name" value="OROTIDINE 5'-PHOSPHATE DECARBOXYLASE"/>
    <property type="match status" value="1"/>
</dbReference>
<dbReference type="Pfam" id="PF00215">
    <property type="entry name" value="OMPdecase"/>
    <property type="match status" value="1"/>
</dbReference>
<dbReference type="SMART" id="SM00934">
    <property type="entry name" value="OMPdecase"/>
    <property type="match status" value="1"/>
</dbReference>
<dbReference type="SUPFAM" id="SSF51366">
    <property type="entry name" value="Ribulose-phoshate binding barrel"/>
    <property type="match status" value="1"/>
</dbReference>
<name>PYRF_BACFR</name>
<protein>
    <recommendedName>
        <fullName evidence="1">Orotidine 5'-phosphate decarboxylase</fullName>
        <ecNumber evidence="1">4.1.1.23</ecNumber>
    </recommendedName>
    <alternativeName>
        <fullName evidence="1">OMP decarboxylase</fullName>
        <shortName evidence="1">OMPDCase</shortName>
        <shortName evidence="1">OMPdecase</shortName>
    </alternativeName>
</protein>
<organism>
    <name type="scientific">Bacteroides fragilis (strain YCH46)</name>
    <dbReference type="NCBI Taxonomy" id="295405"/>
    <lineage>
        <taxon>Bacteria</taxon>
        <taxon>Pseudomonadati</taxon>
        <taxon>Bacteroidota</taxon>
        <taxon>Bacteroidia</taxon>
        <taxon>Bacteroidales</taxon>
        <taxon>Bacteroidaceae</taxon>
        <taxon>Bacteroides</taxon>
    </lineage>
</organism>
<proteinExistence type="inferred from homology"/>
<keyword id="KW-0210">Decarboxylase</keyword>
<keyword id="KW-0456">Lyase</keyword>
<keyword id="KW-0665">Pyrimidine biosynthesis</keyword>
<accession>Q64XW6</accession>
<evidence type="ECO:0000255" key="1">
    <source>
        <dbReference type="HAMAP-Rule" id="MF_01215"/>
    </source>
</evidence>
<feature type="chain" id="PRO_1000138944" description="Orotidine 5'-phosphate decarboxylase">
    <location>
        <begin position="1"/>
        <end position="274"/>
    </location>
</feature>
<feature type="active site" description="Proton donor" evidence="1">
    <location>
        <position position="96"/>
    </location>
</feature>
<sequence>MNKQSLFENIKRKKSFLCVGLDTDIKKIPDHLLDDSDPIFAFNKAIVDATADYCIAYKPNLAFYESMGVKGWIAFEKTVNYIKENYPDQFIIADAKRGDIGNTSAMYARTFFEELDIDSVTVAPYMGEDSVTPFLSYEGKWVILLALTSNKGSHDFQLTEDANGERLFEKVLKKSQEWANDEQMMYVVGATQGRAFEDIRKIVPNHFLLVPGIGAQGGSLEEVCKYGMNSTCGLIVNSSRGIIYVDKTENFAAAARAAAKEVQEQMAEQLKAIL</sequence>
<comment type="catalytic activity">
    <reaction evidence="1">
        <text>orotidine 5'-phosphate + H(+) = UMP + CO2</text>
        <dbReference type="Rhea" id="RHEA:11596"/>
        <dbReference type="ChEBI" id="CHEBI:15378"/>
        <dbReference type="ChEBI" id="CHEBI:16526"/>
        <dbReference type="ChEBI" id="CHEBI:57538"/>
        <dbReference type="ChEBI" id="CHEBI:57865"/>
        <dbReference type="EC" id="4.1.1.23"/>
    </reaction>
</comment>
<comment type="pathway">
    <text evidence="1">Pyrimidine metabolism; UMP biosynthesis via de novo pathway; UMP from orotate: step 2/2.</text>
</comment>
<comment type="similarity">
    <text evidence="1">Belongs to the OMP decarboxylase family. Type 2 subfamily.</text>
</comment>
<reference key="1">
    <citation type="journal article" date="2004" name="Proc. Natl. Acad. Sci. U.S.A.">
        <title>Genomic analysis of Bacteroides fragilis reveals extensive DNA inversions regulating cell surface adaptation.</title>
        <authorList>
            <person name="Kuwahara T."/>
            <person name="Yamashita A."/>
            <person name="Hirakawa H."/>
            <person name="Nakayama H."/>
            <person name="Toh H."/>
            <person name="Okada N."/>
            <person name="Kuhara S."/>
            <person name="Hattori M."/>
            <person name="Hayashi T."/>
            <person name="Ohnishi Y."/>
        </authorList>
    </citation>
    <scope>NUCLEOTIDE SEQUENCE [LARGE SCALE GENOMIC DNA]</scope>
    <source>
        <strain>YCH46</strain>
    </source>
</reference>